<accession>Q5WSS4</accession>
<gene>
    <name evidence="1" type="primary">mnmG</name>
    <name evidence="1" type="synonym">gidA</name>
    <name type="ordered locus">lpl2802</name>
</gene>
<proteinExistence type="inferred from homology"/>
<comment type="function">
    <text evidence="1">NAD-binding protein involved in the addition of a carboxymethylaminomethyl (cmnm) group at the wobble position (U34) of certain tRNAs, forming tRNA-cmnm(5)s(2)U34.</text>
</comment>
<comment type="cofactor">
    <cofactor evidence="1">
        <name>FAD</name>
        <dbReference type="ChEBI" id="CHEBI:57692"/>
    </cofactor>
</comment>
<comment type="subunit">
    <text evidence="1">Homodimer. Heterotetramer of two MnmE and two MnmG subunits.</text>
</comment>
<comment type="subcellular location">
    <subcellularLocation>
        <location evidence="1">Cytoplasm</location>
    </subcellularLocation>
</comment>
<comment type="similarity">
    <text evidence="1">Belongs to the MnmG family.</text>
</comment>
<reference key="1">
    <citation type="journal article" date="2004" name="Nat. Genet.">
        <title>Evidence in the Legionella pneumophila genome for exploitation of host cell functions and high genome plasticity.</title>
        <authorList>
            <person name="Cazalet C."/>
            <person name="Rusniok C."/>
            <person name="Brueggemann H."/>
            <person name="Zidane N."/>
            <person name="Magnier A."/>
            <person name="Ma L."/>
            <person name="Tichit M."/>
            <person name="Jarraud S."/>
            <person name="Bouchier C."/>
            <person name="Vandenesch F."/>
            <person name="Kunst F."/>
            <person name="Etienne J."/>
            <person name="Glaser P."/>
            <person name="Buchrieser C."/>
        </authorList>
    </citation>
    <scope>NUCLEOTIDE SEQUENCE [LARGE SCALE GENOMIC DNA]</scope>
    <source>
        <strain>Lens</strain>
    </source>
</reference>
<keyword id="KW-0963">Cytoplasm</keyword>
<keyword id="KW-0274">FAD</keyword>
<keyword id="KW-0285">Flavoprotein</keyword>
<keyword id="KW-0520">NAD</keyword>
<keyword id="KW-0819">tRNA processing</keyword>
<protein>
    <recommendedName>
        <fullName evidence="1">tRNA uridine 5-carboxymethylaminomethyl modification enzyme MnmG</fullName>
    </recommendedName>
    <alternativeName>
        <fullName evidence="1">Glucose-inhibited division protein A</fullName>
    </alternativeName>
</protein>
<evidence type="ECO:0000255" key="1">
    <source>
        <dbReference type="HAMAP-Rule" id="MF_00129"/>
    </source>
</evidence>
<organism>
    <name type="scientific">Legionella pneumophila (strain Lens)</name>
    <dbReference type="NCBI Taxonomy" id="297245"/>
    <lineage>
        <taxon>Bacteria</taxon>
        <taxon>Pseudomonadati</taxon>
        <taxon>Pseudomonadota</taxon>
        <taxon>Gammaproteobacteria</taxon>
        <taxon>Legionellales</taxon>
        <taxon>Legionellaceae</taxon>
        <taxon>Legionella</taxon>
    </lineage>
</organism>
<name>MNMG_LEGPL</name>
<sequence length="624" mass="68999">MNLEQLYDVIVVGGGHAGTEAALAAARLGVKTLLLTHNIDLLGQMSCNPAIGGIGKGHLVKEIDALDGAMAKAADQAGIQFRILNASKGPAVRATRAQADRVLYRKAIRTQLQSQANLTIFQQAVDDLKIEGGLVTGVVTQMGLTLKARAVVLTVGTFLGGKIHVGMNQYAGGRAGDPPSIALSKSLRDLDLPVGRLKTGTPPRIDRRTIDFSQMVEQPGDTPVPVFSYLGTASDHPQQVSCHITHTTEATHDIIRNNLDKSPMYAGVIEGVGPRYCPSIEDKIVRFADKTSHQIFVEPEGLTTEEIYPNGISTSLPFEVQVQFVRTIKGFENAHITRPGYAIEYDYFDPRGLTSFLQTKAIPNLFFAGQINGTTGYEEAAAQGIIAGMNAALQIKGQDLWCPRRDEAYIGVLIDDLITCGTQEPYRMFTSRAEYRLLLREDNADLRLTEKGRQLGLVGDERWDSFSKKREAIESTQALLHNSWVRVHHNDLFKEALLNPMQHDCRAAEFLKRPEINYRHLLMMDDLNLPELPQEITEQIEIQNKYAGYIDRQQQEIEKLRKHENTMLPETLDYNDVVGLSSEVIQKLNRIKPTSLAQAGRISGVTPAALSLLLVHLKKSRLPV</sequence>
<dbReference type="EMBL" id="CR628337">
    <property type="protein sequence ID" value="CAH17045.1"/>
    <property type="molecule type" value="Genomic_DNA"/>
</dbReference>
<dbReference type="RefSeq" id="WP_011216721.1">
    <property type="nucleotide sequence ID" value="NC_006369.1"/>
</dbReference>
<dbReference type="SMR" id="Q5WSS4"/>
<dbReference type="KEGG" id="lpf:lpl2802"/>
<dbReference type="LegioList" id="lpl2802"/>
<dbReference type="HOGENOM" id="CLU_007831_2_2_6"/>
<dbReference type="Proteomes" id="UP000002517">
    <property type="component" value="Chromosome"/>
</dbReference>
<dbReference type="GO" id="GO:0005829">
    <property type="term" value="C:cytosol"/>
    <property type="evidence" value="ECO:0007669"/>
    <property type="project" value="TreeGrafter"/>
</dbReference>
<dbReference type="GO" id="GO:0050660">
    <property type="term" value="F:flavin adenine dinucleotide binding"/>
    <property type="evidence" value="ECO:0007669"/>
    <property type="project" value="UniProtKB-UniRule"/>
</dbReference>
<dbReference type="GO" id="GO:0030488">
    <property type="term" value="P:tRNA methylation"/>
    <property type="evidence" value="ECO:0007669"/>
    <property type="project" value="TreeGrafter"/>
</dbReference>
<dbReference type="GO" id="GO:0002098">
    <property type="term" value="P:tRNA wobble uridine modification"/>
    <property type="evidence" value="ECO:0007669"/>
    <property type="project" value="InterPro"/>
</dbReference>
<dbReference type="FunFam" id="1.10.150.570:FF:000001">
    <property type="entry name" value="tRNA uridine 5-carboxymethylaminomethyl modification enzyme MnmG"/>
    <property type="match status" value="1"/>
</dbReference>
<dbReference type="FunFam" id="3.50.50.60:FF:000002">
    <property type="entry name" value="tRNA uridine 5-carboxymethylaminomethyl modification enzyme MnmG"/>
    <property type="match status" value="1"/>
</dbReference>
<dbReference type="FunFam" id="3.50.50.60:FF:000010">
    <property type="entry name" value="tRNA uridine 5-carboxymethylaminomethyl modification enzyme MnmG"/>
    <property type="match status" value="1"/>
</dbReference>
<dbReference type="Gene3D" id="3.50.50.60">
    <property type="entry name" value="FAD/NAD(P)-binding domain"/>
    <property type="match status" value="2"/>
</dbReference>
<dbReference type="Gene3D" id="1.10.150.570">
    <property type="entry name" value="GidA associated domain, C-terminal subdomain"/>
    <property type="match status" value="1"/>
</dbReference>
<dbReference type="Gene3D" id="1.10.10.1800">
    <property type="entry name" value="tRNA uridine 5-carboxymethylaminomethyl modification enzyme MnmG/GidA"/>
    <property type="match status" value="1"/>
</dbReference>
<dbReference type="HAMAP" id="MF_00129">
    <property type="entry name" value="MnmG_GidA"/>
    <property type="match status" value="1"/>
</dbReference>
<dbReference type="InterPro" id="IPR036188">
    <property type="entry name" value="FAD/NAD-bd_sf"/>
</dbReference>
<dbReference type="InterPro" id="IPR049312">
    <property type="entry name" value="GIDA_C_N"/>
</dbReference>
<dbReference type="InterPro" id="IPR004416">
    <property type="entry name" value="MnmG"/>
</dbReference>
<dbReference type="InterPro" id="IPR002218">
    <property type="entry name" value="MnmG-rel"/>
</dbReference>
<dbReference type="InterPro" id="IPR020595">
    <property type="entry name" value="MnmG-rel_CS"/>
</dbReference>
<dbReference type="InterPro" id="IPR026904">
    <property type="entry name" value="MnmG_C"/>
</dbReference>
<dbReference type="InterPro" id="IPR047001">
    <property type="entry name" value="MnmG_C_subdom"/>
</dbReference>
<dbReference type="InterPro" id="IPR044920">
    <property type="entry name" value="MnmG_C_subdom_sf"/>
</dbReference>
<dbReference type="InterPro" id="IPR040131">
    <property type="entry name" value="MnmG_N"/>
</dbReference>
<dbReference type="NCBIfam" id="TIGR00136">
    <property type="entry name" value="mnmG_gidA"/>
    <property type="match status" value="1"/>
</dbReference>
<dbReference type="PANTHER" id="PTHR11806">
    <property type="entry name" value="GLUCOSE INHIBITED DIVISION PROTEIN A"/>
    <property type="match status" value="1"/>
</dbReference>
<dbReference type="PANTHER" id="PTHR11806:SF0">
    <property type="entry name" value="PROTEIN MTO1 HOMOLOG, MITOCHONDRIAL"/>
    <property type="match status" value="1"/>
</dbReference>
<dbReference type="Pfam" id="PF01134">
    <property type="entry name" value="GIDA"/>
    <property type="match status" value="1"/>
</dbReference>
<dbReference type="Pfam" id="PF21680">
    <property type="entry name" value="GIDA_C_1st"/>
    <property type="match status" value="1"/>
</dbReference>
<dbReference type="Pfam" id="PF13932">
    <property type="entry name" value="SAM_GIDA_C"/>
    <property type="match status" value="1"/>
</dbReference>
<dbReference type="PRINTS" id="PR00411">
    <property type="entry name" value="PNDRDTASEI"/>
</dbReference>
<dbReference type="SMART" id="SM01228">
    <property type="entry name" value="GIDA_assoc_3"/>
    <property type="match status" value="1"/>
</dbReference>
<dbReference type="SUPFAM" id="SSF51905">
    <property type="entry name" value="FAD/NAD(P)-binding domain"/>
    <property type="match status" value="1"/>
</dbReference>
<dbReference type="PROSITE" id="PS01280">
    <property type="entry name" value="GIDA_1"/>
    <property type="match status" value="1"/>
</dbReference>
<dbReference type="PROSITE" id="PS01281">
    <property type="entry name" value="GIDA_2"/>
    <property type="match status" value="1"/>
</dbReference>
<feature type="chain" id="PRO_0000117120" description="tRNA uridine 5-carboxymethylaminomethyl modification enzyme MnmG">
    <location>
        <begin position="1"/>
        <end position="624"/>
    </location>
</feature>
<feature type="binding site" evidence="1">
    <location>
        <begin position="13"/>
        <end position="18"/>
    </location>
    <ligand>
        <name>FAD</name>
        <dbReference type="ChEBI" id="CHEBI:57692"/>
    </ligand>
</feature>
<feature type="binding site" evidence="1">
    <location>
        <position position="125"/>
    </location>
    <ligand>
        <name>FAD</name>
        <dbReference type="ChEBI" id="CHEBI:57692"/>
    </ligand>
</feature>
<feature type="binding site" evidence="1">
    <location>
        <position position="180"/>
    </location>
    <ligand>
        <name>FAD</name>
        <dbReference type="ChEBI" id="CHEBI:57692"/>
    </ligand>
</feature>
<feature type="binding site" evidence="1">
    <location>
        <begin position="273"/>
        <end position="287"/>
    </location>
    <ligand>
        <name>NAD(+)</name>
        <dbReference type="ChEBI" id="CHEBI:57540"/>
    </ligand>
</feature>
<feature type="binding site" evidence="1">
    <location>
        <position position="370"/>
    </location>
    <ligand>
        <name>FAD</name>
        <dbReference type="ChEBI" id="CHEBI:57692"/>
    </ligand>
</feature>